<reference key="1">
    <citation type="journal article" date="2013" name="Biochem. Biophys. Res. Commun.">
        <title>Molecular approaches for structural characterization of a new potassium channel blocker from Tityus stigmurus venom: cDNA cloning, homology modeling, dynamic simulations and docking.</title>
        <authorList>
            <person name="Almeida D.D."/>
            <person name="Torres T.M."/>
            <person name="Barbosa E.G."/>
            <person name="Lima J.P."/>
            <person name="de Freitas Fernandes-Pedrosa M."/>
        </authorList>
    </citation>
    <scope>NUCLEOTIDE SEQUENCE [MRNA]</scope>
    <scope>3D-STRUCTURE MODELING</scope>
    <source>
        <tissue>Venom gland</tissue>
    </source>
</reference>
<reference key="2">
    <citation type="journal article" date="2007" name="Comp. Biochem. Physiol.">
        <title>Proteomic analysis of the venom from the scorpion Tityus stigmurus: biochemical and physiological comparison with other Tityus species.</title>
        <authorList>
            <person name="Batista C.V.F."/>
            <person name="Roman-Gonzalez S.A."/>
            <person name="Salas-Castillo S.P."/>
            <person name="Zamudio F.Z."/>
            <person name="Gomez-Lagunas F."/>
            <person name="Possani L.D."/>
        </authorList>
    </citation>
    <scope>PROTEIN SEQUENCE OF 43-57</scope>
    <scope>MASS SPECTROMETRY</scope>
    <scope>SUBCELLULAR LOCATION</scope>
    <source>
        <tissue>Venom</tissue>
    </source>
</reference>
<organism>
    <name type="scientific">Tityus stigmurus</name>
    <name type="common">Brazilian scorpion</name>
    <dbReference type="NCBI Taxonomy" id="50344"/>
    <lineage>
        <taxon>Eukaryota</taxon>
        <taxon>Metazoa</taxon>
        <taxon>Ecdysozoa</taxon>
        <taxon>Arthropoda</taxon>
        <taxon>Chelicerata</taxon>
        <taxon>Arachnida</taxon>
        <taxon>Scorpiones</taxon>
        <taxon>Buthida</taxon>
        <taxon>Buthoidea</taxon>
        <taxon>Buthidae</taxon>
        <taxon>Tityus</taxon>
    </lineage>
</organism>
<dbReference type="EMBL" id="JK483711">
    <property type="status" value="NOT_ANNOTATED_CDS"/>
    <property type="molecule type" value="mRNA"/>
</dbReference>
<dbReference type="SMR" id="P0C8W4"/>
<dbReference type="GO" id="GO:0005576">
    <property type="term" value="C:extracellular region"/>
    <property type="evidence" value="ECO:0007669"/>
    <property type="project" value="UniProtKB-SubCell"/>
</dbReference>
<dbReference type="GO" id="GO:0015459">
    <property type="term" value="F:potassium channel regulator activity"/>
    <property type="evidence" value="ECO:0007669"/>
    <property type="project" value="UniProtKB-KW"/>
</dbReference>
<dbReference type="GO" id="GO:0090729">
    <property type="term" value="F:toxin activity"/>
    <property type="evidence" value="ECO:0007669"/>
    <property type="project" value="UniProtKB-KW"/>
</dbReference>
<dbReference type="GO" id="GO:0042742">
    <property type="term" value="P:defense response to bacterium"/>
    <property type="evidence" value="ECO:0007669"/>
    <property type="project" value="UniProtKB-KW"/>
</dbReference>
<dbReference type="InterPro" id="IPR029237">
    <property type="entry name" value="Long_scorpion_toxin_alpha/beta"/>
</dbReference>
<dbReference type="Pfam" id="PF14866">
    <property type="entry name" value="Scorpion_toxin_alpha-beta"/>
    <property type="match status" value="1"/>
</dbReference>
<dbReference type="PROSITE" id="PS51862">
    <property type="entry name" value="BSPN_CSAB"/>
    <property type="match status" value="1"/>
</dbReference>
<protein>
    <recommendedName>
        <fullName evidence="5">Potassium channel toxin TstKMK</fullName>
    </recommendedName>
    <alternativeName>
        <fullName evidence="7">Toxin 5536</fullName>
    </alternativeName>
    <alternativeName>
        <fullName>beta-Ktx</fullName>
    </alternativeName>
</protein>
<accession>P0C8W4</accession>
<sequence>MVATNRCCVFALLFALLLVHSLTEAGKGKEILGKIKEKIIEAKDKMKAGWERLTSQSEYACPAIDKFCEDHCAAKKAVGKCDDFKCKCIKL</sequence>
<comment type="function">
    <text evidence="1">The full peptide presents antibacterial and cytotoxic activities. The synthetic C-terminus (AA 33-76) inhibits voltage-gated potassium channels Kv1.1/KCNA1, Kv1.2/KCNA2, and Kv1.3/KCNA3.</text>
</comment>
<comment type="subcellular location">
    <subcellularLocation>
        <location evidence="4">Secreted</location>
    </subcellularLocation>
</comment>
<comment type="tissue specificity">
    <text evidence="7">Expressed by the venom gland.</text>
</comment>
<comment type="mass spectrometry"/>
<comment type="miscellaneous">
    <text evidence="6">Almeida et al., 2013 suggested naming this protein TstKMK, where KMK represents the first three N-terminal residues of the mature chain. However, Batista et al., 2007 identified a mature chain that begins two residues upstream of KMK.</text>
</comment>
<comment type="similarity">
    <text evidence="6">Belongs to the long chain scorpion toxin family. Class 2 subfamily.</text>
</comment>
<evidence type="ECO:0000250" key="1">
    <source>
        <dbReference type="UniProtKB" id="Q0GY41"/>
    </source>
</evidence>
<evidence type="ECO:0000255" key="2"/>
<evidence type="ECO:0000255" key="3">
    <source>
        <dbReference type="PROSITE-ProRule" id="PRU01209"/>
    </source>
</evidence>
<evidence type="ECO:0000269" key="4">
    <source>
    </source>
</evidence>
<evidence type="ECO:0000303" key="5">
    <source>
    </source>
</evidence>
<evidence type="ECO:0000305" key="6"/>
<evidence type="ECO:0000305" key="7">
    <source>
    </source>
</evidence>
<keyword id="KW-0044">Antibiotic</keyword>
<keyword id="KW-0929">Antimicrobial</keyword>
<keyword id="KW-0903">Direct protein sequencing</keyword>
<keyword id="KW-1015">Disulfide bond</keyword>
<keyword id="KW-0872">Ion channel impairing toxin</keyword>
<keyword id="KW-0528">Neurotoxin</keyword>
<keyword id="KW-0632">Potassium channel impairing toxin</keyword>
<keyword id="KW-0964">Secreted</keyword>
<keyword id="KW-0732">Signal</keyword>
<keyword id="KW-0800">Toxin</keyword>
<keyword id="KW-1220">Voltage-gated potassium channel impairing toxin</keyword>
<name>KBX2_TITST</name>
<feature type="signal peptide" evidence="2">
    <location>
        <begin position="1"/>
        <end position="25"/>
    </location>
</feature>
<feature type="propeptide" id="PRO_0000421251" evidence="4">
    <location>
        <begin position="26"/>
        <end position="42"/>
    </location>
</feature>
<feature type="chain" id="PRO_0000366102" description="Potassium channel toxin TstKMK" evidence="7">
    <location>
        <begin position="43"/>
        <end position="91"/>
    </location>
</feature>
<feature type="domain" description="BetaSPN-type CS-alpha/beta" evidence="3">
    <location>
        <begin position="58"/>
        <end position="91"/>
    </location>
</feature>
<feature type="disulfide bond" evidence="3">
    <location>
        <begin position="61"/>
        <end position="81"/>
    </location>
</feature>
<feature type="disulfide bond" evidence="3">
    <location>
        <begin position="68"/>
        <end position="86"/>
    </location>
</feature>
<feature type="disulfide bond" evidence="3">
    <location>
        <begin position="72"/>
        <end position="88"/>
    </location>
</feature>
<proteinExistence type="evidence at protein level"/>